<protein>
    <recommendedName>
        <fullName evidence="1">Molybdopterin synthase catalytic subunit</fullName>
        <ecNumber evidence="1">2.8.1.12</ecNumber>
    </recommendedName>
    <alternativeName>
        <fullName evidence="1">Common component for nitrate reductase and xanthine dehydrogenase protein H</fullName>
    </alternativeName>
    <alternativeName>
        <fullName evidence="1">Molybdenum cofactor synthesis protein 2 large subunit</fullName>
    </alternativeName>
    <alternativeName>
        <fullName evidence="1">Molybdenum cofactor synthesis protein 2B</fullName>
        <shortName evidence="1">MOCS2B</shortName>
    </alternativeName>
</protein>
<proteinExistence type="inferred from homology"/>
<reference key="1">
    <citation type="journal article" date="2005" name="Nature">
        <title>The genome sequence of the rice blast fungus Magnaporthe grisea.</title>
        <authorList>
            <person name="Dean R.A."/>
            <person name="Talbot N.J."/>
            <person name="Ebbole D.J."/>
            <person name="Farman M.L."/>
            <person name="Mitchell T.K."/>
            <person name="Orbach M.J."/>
            <person name="Thon M.R."/>
            <person name="Kulkarni R."/>
            <person name="Xu J.-R."/>
            <person name="Pan H."/>
            <person name="Read N.D."/>
            <person name="Lee Y.-H."/>
            <person name="Carbone I."/>
            <person name="Brown D."/>
            <person name="Oh Y.Y."/>
            <person name="Donofrio N."/>
            <person name="Jeong J.S."/>
            <person name="Soanes D.M."/>
            <person name="Djonovic S."/>
            <person name="Kolomiets E."/>
            <person name="Rehmeyer C."/>
            <person name="Li W."/>
            <person name="Harding M."/>
            <person name="Kim S."/>
            <person name="Lebrun M.-H."/>
            <person name="Bohnert H."/>
            <person name="Coughlan S."/>
            <person name="Butler J."/>
            <person name="Calvo S.E."/>
            <person name="Ma L.-J."/>
            <person name="Nicol R."/>
            <person name="Purcell S."/>
            <person name="Nusbaum C."/>
            <person name="Galagan J.E."/>
            <person name="Birren B.W."/>
        </authorList>
    </citation>
    <scope>NUCLEOTIDE SEQUENCE [LARGE SCALE GENOMIC DNA]</scope>
    <source>
        <strain>70-15 / ATCC MYA-4617 / FGSC 8958</strain>
    </source>
</reference>
<name>MOC2B_PYRO7</name>
<comment type="function">
    <text evidence="1">Catalytic subunit of the molybdopterin synthase complex, a complex that catalyzes the conversion of precursor Z into molybdopterin. Acts by mediating the incorporation of 2 sulfur atoms from thiocarboxylated MOCS2A into precursor Z to generate a dithiolene group.</text>
</comment>
<comment type="catalytic activity">
    <reaction evidence="1">
        <text>2 [molybdopterin-synthase sulfur-carrier protein]-C-terminal-Gly-aminoethanethioate + cyclic pyranopterin phosphate + H2O = molybdopterin + 2 [molybdopterin-synthase sulfur-carrier protein]-C-terminal Gly-Gly + 2 H(+)</text>
        <dbReference type="Rhea" id="RHEA:26333"/>
        <dbReference type="Rhea" id="RHEA-COMP:12202"/>
        <dbReference type="Rhea" id="RHEA-COMP:19907"/>
        <dbReference type="ChEBI" id="CHEBI:15377"/>
        <dbReference type="ChEBI" id="CHEBI:15378"/>
        <dbReference type="ChEBI" id="CHEBI:58698"/>
        <dbReference type="ChEBI" id="CHEBI:59648"/>
        <dbReference type="ChEBI" id="CHEBI:90778"/>
        <dbReference type="ChEBI" id="CHEBI:232372"/>
        <dbReference type="EC" id="2.8.1.12"/>
    </reaction>
</comment>
<comment type="pathway">
    <text evidence="1">Cofactor biosynthesis; molybdopterin biosynthesis.</text>
</comment>
<comment type="subunit">
    <text evidence="1">Heterotetramer; composed of 2 small (MOCS2A) and 2 large (MOCS2B) subunits.</text>
</comment>
<comment type="subcellular location">
    <subcellularLocation>
        <location evidence="1">Cytoplasm</location>
    </subcellularLocation>
</comment>
<comment type="similarity">
    <text evidence="1">Belongs to the MoaE family. MOCS2B subfamily.</text>
</comment>
<accession>Q2KF83</accession>
<accession>A4RB33</accession>
<accession>G4NKV0</accession>
<organism>
    <name type="scientific">Pyricularia oryzae (strain 70-15 / ATCC MYA-4617 / FGSC 8958)</name>
    <name type="common">Rice blast fungus</name>
    <name type="synonym">Magnaporthe oryzae</name>
    <dbReference type="NCBI Taxonomy" id="242507"/>
    <lineage>
        <taxon>Eukaryota</taxon>
        <taxon>Fungi</taxon>
        <taxon>Dikarya</taxon>
        <taxon>Ascomycota</taxon>
        <taxon>Pezizomycotina</taxon>
        <taxon>Sordariomycetes</taxon>
        <taxon>Sordariomycetidae</taxon>
        <taxon>Magnaporthales</taxon>
        <taxon>Pyriculariaceae</taxon>
        <taxon>Pyricularia</taxon>
    </lineage>
</organism>
<keyword id="KW-0963">Cytoplasm</keyword>
<keyword id="KW-0501">Molybdenum cofactor biosynthesis</keyword>
<keyword id="KW-1185">Reference proteome</keyword>
<keyword id="KW-0808">Transferase</keyword>
<sequence>MSQLDSAQLPNEANEVGEDGCYVGLTHDKLDVQRTMDRVRSPEAGAIVVFVGTTRNSFDGKPVKELNYTAYNPMALRTMISICKAMKTKHGLKGIAMVHRLGVVPISEDSIVIAVSSPHRQAAWRAGEEALEECKAKVEVWKREEFEGGEGVWRANRDGAPGQRIDTAEPAVGAGSGGEIDD</sequence>
<evidence type="ECO:0000255" key="1">
    <source>
        <dbReference type="HAMAP-Rule" id="MF_03052"/>
    </source>
</evidence>
<evidence type="ECO:0000256" key="2">
    <source>
        <dbReference type="SAM" id="MobiDB-lite"/>
    </source>
</evidence>
<dbReference type="EC" id="2.8.1.12" evidence="1"/>
<dbReference type="EMBL" id="CM000230">
    <property type="protein sequence ID" value="EAQ71396.1"/>
    <property type="molecule type" value="Genomic_DNA"/>
</dbReference>
<dbReference type="EMBL" id="CM001237">
    <property type="protein sequence ID" value="EHA45928.1"/>
    <property type="molecule type" value="Genomic_DNA"/>
</dbReference>
<dbReference type="RefSeq" id="XP_003720671.1">
    <property type="nucleotide sequence ID" value="XM_003720623.1"/>
</dbReference>
<dbReference type="SMR" id="Q2KF83"/>
<dbReference type="STRING" id="242507.Q2KF83"/>
<dbReference type="EnsemblFungi" id="MGG_17889T0">
    <property type="protein sequence ID" value="MGG_17889T0"/>
    <property type="gene ID" value="MGG_17889"/>
</dbReference>
<dbReference type="KEGG" id="mgr:MGG_17889"/>
<dbReference type="VEuPathDB" id="FungiDB:MGG_17889"/>
<dbReference type="eggNOG" id="KOG3307">
    <property type="taxonomic scope" value="Eukaryota"/>
</dbReference>
<dbReference type="HOGENOM" id="CLU_089568_3_1_1"/>
<dbReference type="InParanoid" id="Q2KF83"/>
<dbReference type="OMA" id="WKHQFFA"/>
<dbReference type="OrthoDB" id="5531344at2759"/>
<dbReference type="UniPathway" id="UPA00344"/>
<dbReference type="Proteomes" id="UP000009058">
    <property type="component" value="Chromosome 7"/>
</dbReference>
<dbReference type="GO" id="GO:1990140">
    <property type="term" value="C:molybdopterin synthase complex"/>
    <property type="evidence" value="ECO:0000250"/>
    <property type="project" value="UniProtKB"/>
</dbReference>
<dbReference type="GO" id="GO:0030366">
    <property type="term" value="F:molybdopterin synthase activity"/>
    <property type="evidence" value="ECO:0007669"/>
    <property type="project" value="UniProtKB-UniRule"/>
</dbReference>
<dbReference type="GO" id="GO:0006777">
    <property type="term" value="P:Mo-molybdopterin cofactor biosynthetic process"/>
    <property type="evidence" value="ECO:0000250"/>
    <property type="project" value="UniProtKB"/>
</dbReference>
<dbReference type="CDD" id="cd00756">
    <property type="entry name" value="MoaE"/>
    <property type="match status" value="1"/>
</dbReference>
<dbReference type="FunFam" id="3.90.1170.40:FF:000003">
    <property type="entry name" value="Molybdopterin converting factor subunit 2"/>
    <property type="match status" value="1"/>
</dbReference>
<dbReference type="Gene3D" id="3.90.1170.40">
    <property type="entry name" value="Molybdopterin biosynthesis MoaE subunit"/>
    <property type="match status" value="1"/>
</dbReference>
<dbReference type="HAMAP" id="MF_03052">
    <property type="entry name" value="MOC2B"/>
    <property type="match status" value="1"/>
</dbReference>
<dbReference type="InterPro" id="IPR036563">
    <property type="entry name" value="MoaE_sf"/>
</dbReference>
<dbReference type="InterPro" id="IPR028888">
    <property type="entry name" value="MOCS2B_euk"/>
</dbReference>
<dbReference type="InterPro" id="IPR003448">
    <property type="entry name" value="Mopterin_biosynth_MoaE"/>
</dbReference>
<dbReference type="PANTHER" id="PTHR23404">
    <property type="entry name" value="MOLYBDOPTERIN SYNTHASE RELATED"/>
    <property type="match status" value="1"/>
</dbReference>
<dbReference type="Pfam" id="PF02391">
    <property type="entry name" value="MoaE"/>
    <property type="match status" value="1"/>
</dbReference>
<dbReference type="SUPFAM" id="SSF54690">
    <property type="entry name" value="Molybdopterin synthase subunit MoaE"/>
    <property type="match status" value="1"/>
</dbReference>
<feature type="chain" id="PRO_0000369356" description="Molybdopterin synthase catalytic subunit">
    <location>
        <begin position="1"/>
        <end position="182"/>
    </location>
</feature>
<feature type="region of interest" description="Disordered" evidence="2">
    <location>
        <begin position="152"/>
        <end position="182"/>
    </location>
</feature>
<feature type="binding site" evidence="1">
    <location>
        <begin position="119"/>
        <end position="120"/>
    </location>
    <ligand>
        <name>substrate</name>
    </ligand>
</feature>
<feature type="binding site" evidence="1">
    <location>
        <position position="135"/>
    </location>
    <ligand>
        <name>substrate</name>
    </ligand>
</feature>
<feature type="binding site" evidence="1">
    <location>
        <begin position="142"/>
        <end position="144"/>
    </location>
    <ligand>
        <name>substrate</name>
    </ligand>
</feature>
<gene>
    <name evidence="1" type="primary">cnxH</name>
    <name type="ORF">MGCH7_ch7g803</name>
    <name type="ORF">MGG_03018</name>
</gene>